<dbReference type="EMBL" id="AC011915">
    <property type="protein sequence ID" value="AAG52393.1"/>
    <property type="molecule type" value="Genomic_DNA"/>
</dbReference>
<dbReference type="EMBL" id="CP002684">
    <property type="protein sequence ID" value="AEE34808.1"/>
    <property type="molecule type" value="Genomic_DNA"/>
</dbReference>
<dbReference type="EMBL" id="CP002684">
    <property type="protein sequence ID" value="AEE34809.1"/>
    <property type="molecule type" value="Genomic_DNA"/>
</dbReference>
<dbReference type="EMBL" id="AY059782">
    <property type="protein sequence ID" value="AAL24130.1"/>
    <property type="molecule type" value="mRNA"/>
</dbReference>
<dbReference type="EMBL" id="AY091303">
    <property type="protein sequence ID" value="AAM14242.1"/>
    <property type="molecule type" value="mRNA"/>
</dbReference>
<dbReference type="PIR" id="G96709">
    <property type="entry name" value="G96709"/>
</dbReference>
<dbReference type="SMR" id="Q9CA27"/>
<dbReference type="BioGRID" id="28405">
    <property type="interactions" value="1"/>
</dbReference>
<dbReference type="FunCoup" id="Q9CA27">
    <property type="interactions" value="617"/>
</dbReference>
<dbReference type="IntAct" id="Q9CA27">
    <property type="interactions" value="1"/>
</dbReference>
<dbReference type="STRING" id="3702.Q9CA27"/>
<dbReference type="GlyGen" id="Q9CA27">
    <property type="glycosylation" value="1 site"/>
</dbReference>
<dbReference type="PaxDb" id="3702-AT1G68550.2"/>
<dbReference type="EnsemblPlants" id="AT1G68550.1">
    <property type="protein sequence ID" value="AT1G68550.1"/>
    <property type="gene ID" value="AT1G68550"/>
</dbReference>
<dbReference type="EnsemblPlants" id="AT1G68550.2">
    <property type="protein sequence ID" value="AT1G68550.2"/>
    <property type="gene ID" value="AT1G68550"/>
</dbReference>
<dbReference type="GeneID" id="843184"/>
<dbReference type="Gramene" id="AT1G68550.1">
    <property type="protein sequence ID" value="AT1G68550.1"/>
    <property type="gene ID" value="AT1G68550"/>
</dbReference>
<dbReference type="Gramene" id="AT1G68550.2">
    <property type="protein sequence ID" value="AT1G68550.2"/>
    <property type="gene ID" value="AT1G68550"/>
</dbReference>
<dbReference type="KEGG" id="ath:AT1G68550"/>
<dbReference type="Araport" id="AT1G68550"/>
<dbReference type="TAIR" id="AT1G68550">
    <property type="gene designation" value="CRF10"/>
</dbReference>
<dbReference type="eggNOG" id="ENOG502RZ0C">
    <property type="taxonomic scope" value="Eukaryota"/>
</dbReference>
<dbReference type="HOGENOM" id="CLU_062946_0_0_1"/>
<dbReference type="InParanoid" id="Q9CA27"/>
<dbReference type="OMA" id="KSICCNS"/>
<dbReference type="OrthoDB" id="1917565at2759"/>
<dbReference type="PhylomeDB" id="Q9CA27"/>
<dbReference type="PRO" id="PR:Q9CA27"/>
<dbReference type="Proteomes" id="UP000006548">
    <property type="component" value="Chromosome 1"/>
</dbReference>
<dbReference type="ExpressionAtlas" id="Q9CA27">
    <property type="expression patterns" value="baseline and differential"/>
</dbReference>
<dbReference type="GO" id="GO:0005634">
    <property type="term" value="C:nucleus"/>
    <property type="evidence" value="ECO:0007669"/>
    <property type="project" value="UniProtKB-SubCell"/>
</dbReference>
<dbReference type="GO" id="GO:0003700">
    <property type="term" value="F:DNA-binding transcription factor activity"/>
    <property type="evidence" value="ECO:0000250"/>
    <property type="project" value="TAIR"/>
</dbReference>
<dbReference type="GO" id="GO:0000976">
    <property type="term" value="F:transcription cis-regulatory region binding"/>
    <property type="evidence" value="ECO:0000353"/>
    <property type="project" value="TAIR"/>
</dbReference>
<dbReference type="GO" id="GO:0009873">
    <property type="term" value="P:ethylene-activated signaling pathway"/>
    <property type="evidence" value="ECO:0007669"/>
    <property type="project" value="UniProtKB-KW"/>
</dbReference>
<dbReference type="CDD" id="cd00018">
    <property type="entry name" value="AP2"/>
    <property type="match status" value="1"/>
</dbReference>
<dbReference type="FunFam" id="3.30.730.10:FF:000005">
    <property type="entry name" value="ethylene-responsive transcription factor RAP2-11"/>
    <property type="match status" value="1"/>
</dbReference>
<dbReference type="Gene3D" id="3.30.730.10">
    <property type="entry name" value="AP2/ERF domain"/>
    <property type="match status" value="1"/>
</dbReference>
<dbReference type="InterPro" id="IPR001471">
    <property type="entry name" value="AP2/ERF_dom"/>
</dbReference>
<dbReference type="InterPro" id="IPR036955">
    <property type="entry name" value="AP2/ERF_dom_sf"/>
</dbReference>
<dbReference type="InterPro" id="IPR050913">
    <property type="entry name" value="AP2/ERF_ERF_subfamily"/>
</dbReference>
<dbReference type="InterPro" id="IPR016177">
    <property type="entry name" value="DNA-bd_dom_sf"/>
</dbReference>
<dbReference type="PANTHER" id="PTHR31194:SF62">
    <property type="entry name" value="ETHYLENE-RESPONSIVE TRANSCRIPTION FACTOR ERF118"/>
    <property type="match status" value="1"/>
</dbReference>
<dbReference type="PANTHER" id="PTHR31194">
    <property type="entry name" value="SHN SHINE , DNA BINDING / TRANSCRIPTION FACTOR"/>
    <property type="match status" value="1"/>
</dbReference>
<dbReference type="Pfam" id="PF00847">
    <property type="entry name" value="AP2"/>
    <property type="match status" value="1"/>
</dbReference>
<dbReference type="PRINTS" id="PR00367">
    <property type="entry name" value="ETHRSPELEMNT"/>
</dbReference>
<dbReference type="SMART" id="SM00380">
    <property type="entry name" value="AP2"/>
    <property type="match status" value="1"/>
</dbReference>
<dbReference type="SUPFAM" id="SSF54171">
    <property type="entry name" value="DNA-binding domain"/>
    <property type="match status" value="1"/>
</dbReference>
<dbReference type="PROSITE" id="PS51032">
    <property type="entry name" value="AP2_ERF"/>
    <property type="match status" value="1"/>
</dbReference>
<accession>Q9CA27</accession>
<gene>
    <name type="primary">ERF118</name>
    <name type="ordered locus">At1g68550</name>
    <name type="ORF">T26J14.12</name>
</gene>
<protein>
    <recommendedName>
        <fullName>Ethylene-responsive transcription factor ERF118</fullName>
    </recommendedName>
</protein>
<name>EF118_ARATH</name>
<reference key="1">
    <citation type="journal article" date="2000" name="Nature">
        <title>Sequence and analysis of chromosome 1 of the plant Arabidopsis thaliana.</title>
        <authorList>
            <person name="Theologis A."/>
            <person name="Ecker J.R."/>
            <person name="Palm C.J."/>
            <person name="Federspiel N.A."/>
            <person name="Kaul S."/>
            <person name="White O."/>
            <person name="Alonso J."/>
            <person name="Altafi H."/>
            <person name="Araujo R."/>
            <person name="Bowman C.L."/>
            <person name="Brooks S.Y."/>
            <person name="Buehler E."/>
            <person name="Chan A."/>
            <person name="Chao Q."/>
            <person name="Chen H."/>
            <person name="Cheuk R.F."/>
            <person name="Chin C.W."/>
            <person name="Chung M.K."/>
            <person name="Conn L."/>
            <person name="Conway A.B."/>
            <person name="Conway A.R."/>
            <person name="Creasy T.H."/>
            <person name="Dewar K."/>
            <person name="Dunn P."/>
            <person name="Etgu P."/>
            <person name="Feldblyum T.V."/>
            <person name="Feng J.-D."/>
            <person name="Fong B."/>
            <person name="Fujii C.Y."/>
            <person name="Gill J.E."/>
            <person name="Goldsmith A.D."/>
            <person name="Haas B."/>
            <person name="Hansen N.F."/>
            <person name="Hughes B."/>
            <person name="Huizar L."/>
            <person name="Hunter J.L."/>
            <person name="Jenkins J."/>
            <person name="Johnson-Hopson C."/>
            <person name="Khan S."/>
            <person name="Khaykin E."/>
            <person name="Kim C.J."/>
            <person name="Koo H.L."/>
            <person name="Kremenetskaia I."/>
            <person name="Kurtz D.B."/>
            <person name="Kwan A."/>
            <person name="Lam B."/>
            <person name="Langin-Hooper S."/>
            <person name="Lee A."/>
            <person name="Lee J.M."/>
            <person name="Lenz C.A."/>
            <person name="Li J.H."/>
            <person name="Li Y.-P."/>
            <person name="Lin X."/>
            <person name="Liu S.X."/>
            <person name="Liu Z.A."/>
            <person name="Luros J.S."/>
            <person name="Maiti R."/>
            <person name="Marziali A."/>
            <person name="Militscher J."/>
            <person name="Miranda M."/>
            <person name="Nguyen M."/>
            <person name="Nierman W.C."/>
            <person name="Osborne B.I."/>
            <person name="Pai G."/>
            <person name="Peterson J."/>
            <person name="Pham P.K."/>
            <person name="Rizzo M."/>
            <person name="Rooney T."/>
            <person name="Rowley D."/>
            <person name="Sakano H."/>
            <person name="Salzberg S.L."/>
            <person name="Schwartz J.R."/>
            <person name="Shinn P."/>
            <person name="Southwick A.M."/>
            <person name="Sun H."/>
            <person name="Tallon L.J."/>
            <person name="Tambunga G."/>
            <person name="Toriumi M.J."/>
            <person name="Town C.D."/>
            <person name="Utterback T."/>
            <person name="Van Aken S."/>
            <person name="Vaysberg M."/>
            <person name="Vysotskaia V.S."/>
            <person name="Walker M."/>
            <person name="Wu D."/>
            <person name="Yu G."/>
            <person name="Fraser C.M."/>
            <person name="Venter J.C."/>
            <person name="Davis R.W."/>
        </authorList>
    </citation>
    <scope>NUCLEOTIDE SEQUENCE [LARGE SCALE GENOMIC DNA]</scope>
    <source>
        <strain>cv. Columbia</strain>
    </source>
</reference>
<reference key="2">
    <citation type="journal article" date="2017" name="Plant J.">
        <title>Araport11: a complete reannotation of the Arabidopsis thaliana reference genome.</title>
        <authorList>
            <person name="Cheng C.Y."/>
            <person name="Krishnakumar V."/>
            <person name="Chan A.P."/>
            <person name="Thibaud-Nissen F."/>
            <person name="Schobel S."/>
            <person name="Town C.D."/>
        </authorList>
    </citation>
    <scope>GENOME REANNOTATION</scope>
    <source>
        <strain>cv. Columbia</strain>
    </source>
</reference>
<reference key="3">
    <citation type="journal article" date="2003" name="Science">
        <title>Empirical analysis of transcriptional activity in the Arabidopsis genome.</title>
        <authorList>
            <person name="Yamada K."/>
            <person name="Lim J."/>
            <person name="Dale J.M."/>
            <person name="Chen H."/>
            <person name="Shinn P."/>
            <person name="Palm C.J."/>
            <person name="Southwick A.M."/>
            <person name="Wu H.C."/>
            <person name="Kim C.J."/>
            <person name="Nguyen M."/>
            <person name="Pham P.K."/>
            <person name="Cheuk R.F."/>
            <person name="Karlin-Newmann G."/>
            <person name="Liu S.X."/>
            <person name="Lam B."/>
            <person name="Sakano H."/>
            <person name="Wu T."/>
            <person name="Yu G."/>
            <person name="Miranda M."/>
            <person name="Quach H.L."/>
            <person name="Tripp M."/>
            <person name="Chang C.H."/>
            <person name="Lee J.M."/>
            <person name="Toriumi M.J."/>
            <person name="Chan M.M."/>
            <person name="Tang C.C."/>
            <person name="Onodera C.S."/>
            <person name="Deng J.M."/>
            <person name="Akiyama K."/>
            <person name="Ansari Y."/>
            <person name="Arakawa T."/>
            <person name="Banh J."/>
            <person name="Banno F."/>
            <person name="Bowser L."/>
            <person name="Brooks S.Y."/>
            <person name="Carninci P."/>
            <person name="Chao Q."/>
            <person name="Choy N."/>
            <person name="Enju A."/>
            <person name="Goldsmith A.D."/>
            <person name="Gurjal M."/>
            <person name="Hansen N.F."/>
            <person name="Hayashizaki Y."/>
            <person name="Johnson-Hopson C."/>
            <person name="Hsuan V.W."/>
            <person name="Iida K."/>
            <person name="Karnes M."/>
            <person name="Khan S."/>
            <person name="Koesema E."/>
            <person name="Ishida J."/>
            <person name="Jiang P.X."/>
            <person name="Jones T."/>
            <person name="Kawai J."/>
            <person name="Kamiya A."/>
            <person name="Meyers C."/>
            <person name="Nakajima M."/>
            <person name="Narusaka M."/>
            <person name="Seki M."/>
            <person name="Sakurai T."/>
            <person name="Satou M."/>
            <person name="Tamse R."/>
            <person name="Vaysberg M."/>
            <person name="Wallender E.K."/>
            <person name="Wong C."/>
            <person name="Yamamura Y."/>
            <person name="Yuan S."/>
            <person name="Shinozaki K."/>
            <person name="Davis R.W."/>
            <person name="Theologis A."/>
            <person name="Ecker J.R."/>
        </authorList>
    </citation>
    <scope>NUCLEOTIDE SEQUENCE [LARGE SCALE MRNA]</scope>
    <source>
        <strain>cv. Columbia</strain>
    </source>
</reference>
<reference key="4">
    <citation type="journal article" date="2006" name="Plant Physiol.">
        <title>Genome-wide analysis of the ERF gene family in Arabidopsis and rice.</title>
        <authorList>
            <person name="Nakano T."/>
            <person name="Suzuki K."/>
            <person name="Fujimura T."/>
            <person name="Shinshi H."/>
        </authorList>
    </citation>
    <scope>GENE FAMILY</scope>
    <scope>NOMENCLATURE</scope>
</reference>
<sequence>MVAIRKEQSLSGVSSEIKKRAKRNTLSSLPQETQPLRKVRIIVNDPYATDDSSSDEEELKVPKPRKMKRIVREINFPSMEVSEQPSESSSQDSTKTDGKIAVSASPAVPRKKPVGVRQRKWGKWAAEIRDPIKKTRTWLGTFDTLEEAAKAYDAKKLEFDAIVAGNVSTTKRDVSSSETSQCSRSSPVVPVEQDDTSASALTCVNNPDDVSTVAPTAPTPNVPAGGNKETLFDFDFTNLQIPDFGFLAEEQQDLDFDCFLADDQFDDFGLLDDIQGFEDNGPSALPDFDFADVEDLQLADSSFGFLDQLAPINISCPLKSFAAS</sequence>
<organism>
    <name type="scientific">Arabidopsis thaliana</name>
    <name type="common">Mouse-ear cress</name>
    <dbReference type="NCBI Taxonomy" id="3702"/>
    <lineage>
        <taxon>Eukaryota</taxon>
        <taxon>Viridiplantae</taxon>
        <taxon>Streptophyta</taxon>
        <taxon>Embryophyta</taxon>
        <taxon>Tracheophyta</taxon>
        <taxon>Spermatophyta</taxon>
        <taxon>Magnoliopsida</taxon>
        <taxon>eudicotyledons</taxon>
        <taxon>Gunneridae</taxon>
        <taxon>Pentapetalae</taxon>
        <taxon>rosids</taxon>
        <taxon>malvids</taxon>
        <taxon>Brassicales</taxon>
        <taxon>Brassicaceae</taxon>
        <taxon>Camelineae</taxon>
        <taxon>Arabidopsis</taxon>
    </lineage>
</organism>
<comment type="function">
    <text evidence="1">Probably acts as a transcriptional activator. Binds to the GCC-box pathogenesis-related promoter element. May be involved in the regulation of gene expression by stress factors and by components of stress signal transduction pathways (By similarity).</text>
</comment>
<comment type="interaction">
    <interactant intactId="EBI-25513289">
        <id>Q9CA27</id>
    </interactant>
    <interactant intactId="EBI-4453230">
        <id>O80902</id>
        <label>CIPK22</label>
    </interactant>
    <organismsDiffer>false</organismsDiffer>
    <experiments>5</experiments>
</comment>
<comment type="subcellular location">
    <subcellularLocation>
        <location evidence="4">Nucleus</location>
    </subcellularLocation>
</comment>
<comment type="similarity">
    <text evidence="4">Belongs to the AP2/ERF transcription factor family. ERF subfamily.</text>
</comment>
<proteinExistence type="evidence at protein level"/>
<keyword id="KW-0010">Activator</keyword>
<keyword id="KW-0238">DNA-binding</keyword>
<keyword id="KW-0936">Ethylene signaling pathway</keyword>
<keyword id="KW-0539">Nucleus</keyword>
<keyword id="KW-1185">Reference proteome</keyword>
<keyword id="KW-0804">Transcription</keyword>
<keyword id="KW-0805">Transcription regulation</keyword>
<evidence type="ECO:0000250" key="1"/>
<evidence type="ECO:0000255" key="2">
    <source>
        <dbReference type="PROSITE-ProRule" id="PRU00366"/>
    </source>
</evidence>
<evidence type="ECO:0000256" key="3">
    <source>
        <dbReference type="SAM" id="MobiDB-lite"/>
    </source>
</evidence>
<evidence type="ECO:0000305" key="4"/>
<feature type="chain" id="PRO_0000290429" description="Ethylene-responsive transcription factor ERF118">
    <location>
        <begin position="1"/>
        <end position="324"/>
    </location>
</feature>
<feature type="DNA-binding region" description="AP2/ERF" evidence="2">
    <location>
        <begin position="112"/>
        <end position="170"/>
    </location>
</feature>
<feature type="region of interest" description="Disordered" evidence="3">
    <location>
        <begin position="1"/>
        <end position="120"/>
    </location>
</feature>
<feature type="compositionally biased region" description="Polar residues" evidence="3">
    <location>
        <begin position="24"/>
        <end position="34"/>
    </location>
</feature>
<feature type="compositionally biased region" description="Low complexity" evidence="3">
    <location>
        <begin position="77"/>
        <end position="93"/>
    </location>
</feature>
<feature type="compositionally biased region" description="Basic residues" evidence="3">
    <location>
        <begin position="109"/>
        <end position="120"/>
    </location>
</feature>